<name>RDRP_I49A1</name>
<sequence>MDVNPTLLFLKVPAQNAISTTFPYTGDPPYSHGTGTGYTMDTVNRTHQYSEKGKWTTNTETGAPQLNPIDGPLPEDNEPSGYAQTDCVLEAMAFLEESHPGIFENSCLETMEVVQQTRVDKLTQGRQTYDWTLNRNQPAATALANTIEVFRSNDLTANESGRLIDFLKDVMESMDKEEMEITTHFQRKRRVRDNMTKKMITQRTIGKKKQRLNKRSYLIRALTLNTMTKDAERGKLKRRAIATPGMQIRGFVYFVETLARSICEKLEQSGLPVGGNEKKAKLANVVRKMMTNSQDTELSFTITGDNTKWNENQNPRMFLAMITYITRNQPEWFRNVLSIAPIMFSNKMARLGKGYMFESKSMKLRTQIPAEMLASIDLKYFNESTRKKIEKIRPLLIDGTASLSPGMMMGMFNMLSTVLGVSILNLGQKRYTKTTYWWDGLQSSDDFALIVNAPNHEGIQAGVDRFYRTCKLVGINMSKKKSYINRTGTFEFTSFFYRYGFVANFSMELPSFGVSGINESADMSIGVTVIKNNMINNDLGPATAQMALQLFIKDYRYTYRCHRGDTQIQTRRSFELKRLWEQTRSKAGLLVSDGGPNLYNIRNLHIPEVCLKWELMDEEYQGRLCNPLNPFISHKEIESVNNAVVMPAHGPAKSMEYDAFATTHSWIPKRNRSILNTSQRGILEDEQMYQKCCNLFEKFFPSSSYRRPVGISSMVEAMVSRARIDARIDFESGRIKKEEFAEIMKICSTIEELRRQK</sequence>
<dbReference type="EC" id="2.7.7.48" evidence="1"/>
<dbReference type="EMBL" id="CY014677">
    <property type="protein sequence ID" value="ABI84542.1"/>
    <property type="molecule type" value="Genomic_RNA"/>
</dbReference>
<dbReference type="SMR" id="Q0A440"/>
<dbReference type="Proteomes" id="UP000008217">
    <property type="component" value="Genome"/>
</dbReference>
<dbReference type="GO" id="GO:0030430">
    <property type="term" value="C:host cell cytoplasm"/>
    <property type="evidence" value="ECO:0007669"/>
    <property type="project" value="UniProtKB-SubCell"/>
</dbReference>
<dbReference type="GO" id="GO:0042025">
    <property type="term" value="C:host cell nucleus"/>
    <property type="evidence" value="ECO:0007669"/>
    <property type="project" value="UniProtKB-SubCell"/>
</dbReference>
<dbReference type="GO" id="GO:0000166">
    <property type="term" value="F:nucleotide binding"/>
    <property type="evidence" value="ECO:0007669"/>
    <property type="project" value="UniProtKB-UniRule"/>
</dbReference>
<dbReference type="GO" id="GO:0003723">
    <property type="term" value="F:RNA binding"/>
    <property type="evidence" value="ECO:0007669"/>
    <property type="project" value="InterPro"/>
</dbReference>
<dbReference type="GO" id="GO:0003968">
    <property type="term" value="F:RNA-directed RNA polymerase activity"/>
    <property type="evidence" value="ECO:0007669"/>
    <property type="project" value="UniProtKB-UniRule"/>
</dbReference>
<dbReference type="GO" id="GO:0006351">
    <property type="term" value="P:DNA-templated transcription"/>
    <property type="evidence" value="ECO:0007669"/>
    <property type="project" value="UniProtKB-UniRule"/>
</dbReference>
<dbReference type="GO" id="GO:0039657">
    <property type="term" value="P:symbiont-mediated suppression of host gene expression"/>
    <property type="evidence" value="ECO:0007669"/>
    <property type="project" value="UniProtKB-KW"/>
</dbReference>
<dbReference type="GO" id="GO:0039523">
    <property type="term" value="P:symbiont-mediated suppression of host mRNA transcription via inhibition of RNA polymerase II activity"/>
    <property type="evidence" value="ECO:0007669"/>
    <property type="project" value="UniProtKB-UniRule"/>
</dbReference>
<dbReference type="GO" id="GO:0039694">
    <property type="term" value="P:viral RNA genome replication"/>
    <property type="evidence" value="ECO:0007669"/>
    <property type="project" value="UniProtKB-UniRule"/>
</dbReference>
<dbReference type="GO" id="GO:0019083">
    <property type="term" value="P:viral transcription"/>
    <property type="evidence" value="ECO:0007669"/>
    <property type="project" value="UniProtKB-KW"/>
</dbReference>
<dbReference type="Gene3D" id="6.10.140.720">
    <property type="match status" value="1"/>
</dbReference>
<dbReference type="HAMAP" id="MF_04065">
    <property type="entry name" value="INFV_RDRP"/>
    <property type="match status" value="1"/>
</dbReference>
<dbReference type="InterPro" id="IPR007099">
    <property type="entry name" value="RNA-dir_pol_NSvirus"/>
</dbReference>
<dbReference type="InterPro" id="IPR001407">
    <property type="entry name" value="RNA_pol_PB1_influenza"/>
</dbReference>
<dbReference type="Pfam" id="PF00602">
    <property type="entry name" value="Flu_PB1"/>
    <property type="match status" value="1"/>
</dbReference>
<dbReference type="PIRSF" id="PIRSF000827">
    <property type="entry name" value="RdRPol_OMV"/>
    <property type="match status" value="1"/>
</dbReference>
<dbReference type="PROSITE" id="PS50525">
    <property type="entry name" value="RDRP_SSRNA_NEG_SEG"/>
    <property type="match status" value="1"/>
</dbReference>
<accession>Q0A440</accession>
<organism>
    <name type="scientific">Influenza A virus (strain A/Duck/Germany/1949 H10N7)</name>
    <dbReference type="NCBI Taxonomy" id="382838"/>
    <lineage>
        <taxon>Viruses</taxon>
        <taxon>Riboviria</taxon>
        <taxon>Orthornavirae</taxon>
        <taxon>Negarnaviricota</taxon>
        <taxon>Polyploviricotina</taxon>
        <taxon>Insthoviricetes</taxon>
        <taxon>Articulavirales</taxon>
        <taxon>Orthomyxoviridae</taxon>
        <taxon>Alphainfluenzavirus</taxon>
        <taxon>Alphainfluenzavirus influenzae</taxon>
        <taxon>Influenza A virus</taxon>
    </lineage>
</organism>
<organismHost>
    <name type="scientific">Aves</name>
    <dbReference type="NCBI Taxonomy" id="8782"/>
</organismHost>
<comment type="function">
    <text evidence="1">RNA-dependent RNA polymerase which is responsible for replication and transcription of virus RNA segments. The transcription of viral mRNAs occurs by a unique mechanism called cap-snatching. 5' methylated caps of cellular mRNAs are cleaved after 10-13 nucleotides by PA. In turn, these short capped RNAs are used as primers by PB1 for transcription of viral mRNAs. During virus replication, PB1 initiates RNA synthesis and copy vRNA into complementary RNA (cRNA) which in turn serves as a template for the production of more vRNAs.</text>
</comment>
<comment type="catalytic activity">
    <reaction evidence="1">
        <text>RNA(n) + a ribonucleoside 5'-triphosphate = RNA(n+1) + diphosphate</text>
        <dbReference type="Rhea" id="RHEA:21248"/>
        <dbReference type="Rhea" id="RHEA-COMP:14527"/>
        <dbReference type="Rhea" id="RHEA-COMP:17342"/>
        <dbReference type="ChEBI" id="CHEBI:33019"/>
        <dbReference type="ChEBI" id="CHEBI:61557"/>
        <dbReference type="ChEBI" id="CHEBI:140395"/>
        <dbReference type="EC" id="2.7.7.48"/>
    </reaction>
</comment>
<comment type="subunit">
    <text evidence="1">Influenza RNA polymerase is composed of three subunits: PB1, PB2 and PA. Interacts (via N-terminus) with PA (via C-terminus). Interacts (via C-terminus) with PB2 (via N-terminus); this interaction is essential for transcription initiation.</text>
</comment>
<comment type="subcellular location">
    <subcellularLocation>
        <location evidence="1">Host nucleus</location>
    </subcellularLocation>
    <subcellularLocation>
        <location evidence="1">Host cytoplasm</location>
    </subcellularLocation>
</comment>
<comment type="PTM">
    <text evidence="1">Phosphorylated by host PRKCA.</text>
</comment>
<comment type="similarity">
    <text evidence="1">Belongs to the influenza viruses polymerase PB1 family.</text>
</comment>
<keyword id="KW-1262">Eukaryotic host gene expression shutoff by virus</keyword>
<keyword id="KW-1191">Eukaryotic host transcription shutoff by virus</keyword>
<keyword id="KW-1035">Host cytoplasm</keyword>
<keyword id="KW-1190">Host gene expression shutoff by virus</keyword>
<keyword id="KW-1048">Host nucleus</keyword>
<keyword id="KW-0945">Host-virus interaction</keyword>
<keyword id="KW-1104">Inhibition of host RNA polymerase II by virus</keyword>
<keyword id="KW-0547">Nucleotide-binding</keyword>
<keyword id="KW-0548">Nucleotidyltransferase</keyword>
<keyword id="KW-0597">Phosphoprotein</keyword>
<keyword id="KW-0696">RNA-directed RNA polymerase</keyword>
<keyword id="KW-0808">Transferase</keyword>
<keyword id="KW-0693">Viral RNA replication</keyword>
<keyword id="KW-1195">Viral transcription</keyword>
<feature type="chain" id="PRO_0000279593" description="RNA-directed RNA polymerase catalytic subunit">
    <location>
        <begin position="1"/>
        <end position="757"/>
    </location>
</feature>
<feature type="domain" description="RdRp catalytic" evidence="1">
    <location>
        <begin position="286"/>
        <end position="483"/>
    </location>
</feature>
<feature type="region of interest" description="Disordered" evidence="2">
    <location>
        <begin position="50"/>
        <end position="82"/>
    </location>
</feature>
<feature type="region of interest" description="Promoter-binding site" evidence="1">
    <location>
        <begin position="249"/>
        <end position="256"/>
    </location>
</feature>
<feature type="short sequence motif" description="Nuclear localization signal" evidence="1">
    <location>
        <begin position="187"/>
        <end position="195"/>
    </location>
</feature>
<feature type="short sequence motif" description="Nuclear localization signal" evidence="1">
    <location>
        <begin position="203"/>
        <end position="216"/>
    </location>
</feature>
<feature type="compositionally biased region" description="Polar residues" evidence="2">
    <location>
        <begin position="55"/>
        <end position="64"/>
    </location>
</feature>
<evidence type="ECO:0000255" key="1">
    <source>
        <dbReference type="HAMAP-Rule" id="MF_04065"/>
    </source>
</evidence>
<evidence type="ECO:0000256" key="2">
    <source>
        <dbReference type="SAM" id="MobiDB-lite"/>
    </source>
</evidence>
<reference key="1">
    <citation type="journal article" date="2006" name="Science">
        <title>Large-scale sequence analysis of avian influenza isolates.</title>
        <authorList>
            <person name="Obenauer J.C."/>
            <person name="Denson J."/>
            <person name="Mehta P.K."/>
            <person name="Su X."/>
            <person name="Mukatira S."/>
            <person name="Finkelstein D.B."/>
            <person name="Xu X."/>
            <person name="Wang J."/>
            <person name="Ma J."/>
            <person name="Fan Y."/>
            <person name="Rakestraw K.M."/>
            <person name="Webster R.G."/>
            <person name="Hoffmann E."/>
            <person name="Krauss S."/>
            <person name="Zheng J."/>
            <person name="Zhang Z."/>
            <person name="Naeve C.W."/>
        </authorList>
    </citation>
    <scope>NUCLEOTIDE SEQUENCE [GENOMIC RNA]</scope>
</reference>
<proteinExistence type="inferred from homology"/>
<gene>
    <name evidence="1" type="primary">PB1</name>
</gene>
<protein>
    <recommendedName>
        <fullName evidence="1">RNA-directed RNA polymerase catalytic subunit</fullName>
        <ecNumber evidence="1">2.7.7.48</ecNumber>
    </recommendedName>
    <alternativeName>
        <fullName evidence="1">Polymerase basic protein 1</fullName>
        <shortName evidence="1">PB1</shortName>
    </alternativeName>
    <alternativeName>
        <fullName evidence="1">RNA-directed RNA polymerase subunit P1</fullName>
    </alternativeName>
</protein>